<comment type="subcellular location">
    <subcellularLocation>
        <location evidence="2">Cell membrane</location>
        <topology evidence="2">Multi-pass membrane protein</topology>
    </subcellularLocation>
</comment>
<protein>
    <recommendedName>
        <fullName>Uncharacterized protein PA4219</fullName>
    </recommendedName>
</protein>
<reference key="1">
    <citation type="journal article" date="1994" name="J. Bacteriol.">
        <title>FptA, the Fe(III)-pyochelin receptor of Pseudomonas aeruginosa: a phenolate siderophore receptor homologous to hydroxamate siderophore receptors.</title>
        <authorList>
            <person name="Ankenbauer R.G."/>
            <person name="Quan H.N."/>
        </authorList>
    </citation>
    <scope>NUCLEOTIDE SEQUENCE [GENOMIC DNA]</scope>
    <source>
        <strain>PAO</strain>
    </source>
</reference>
<reference key="2">
    <citation type="journal article" date="2000" name="Nature">
        <title>Complete genome sequence of Pseudomonas aeruginosa PAO1, an opportunistic pathogen.</title>
        <authorList>
            <person name="Stover C.K."/>
            <person name="Pham X.-Q.T."/>
            <person name="Erwin A.L."/>
            <person name="Mizoguchi S.D."/>
            <person name="Warrener P."/>
            <person name="Hickey M.J."/>
            <person name="Brinkman F.S.L."/>
            <person name="Hufnagle W.O."/>
            <person name="Kowalik D.J."/>
            <person name="Lagrou M."/>
            <person name="Garber R.L."/>
            <person name="Goltry L."/>
            <person name="Tolentino E."/>
            <person name="Westbrock-Wadman S."/>
            <person name="Yuan Y."/>
            <person name="Brody L.L."/>
            <person name="Coulter S.N."/>
            <person name="Folger K.R."/>
            <person name="Kas A."/>
            <person name="Larbig K."/>
            <person name="Lim R.M."/>
            <person name="Smith K.A."/>
            <person name="Spencer D.H."/>
            <person name="Wong G.K.-S."/>
            <person name="Wu Z."/>
            <person name="Paulsen I.T."/>
            <person name="Reizer J."/>
            <person name="Saier M.H. Jr."/>
            <person name="Hancock R.E.W."/>
            <person name="Lory S."/>
            <person name="Olson M.V."/>
        </authorList>
    </citation>
    <scope>NUCLEOTIDE SEQUENCE [LARGE SCALE GENOMIC DNA]</scope>
    <source>
        <strain>ATCC 15692 / DSM 22644 / CIP 104116 / JCM 14847 / LMG 12228 / 1C / PRS 101 / PAO1</strain>
    </source>
</reference>
<proteinExistence type="predicted"/>
<gene>
    <name type="ordered locus">PA4219</name>
</gene>
<dbReference type="EMBL" id="U03161">
    <property type="protein sequence ID" value="AAC43215.1"/>
    <property type="molecule type" value="Unassigned_DNA"/>
</dbReference>
<dbReference type="EMBL" id="AE004091">
    <property type="protein sequence ID" value="AAG07607.1"/>
    <property type="molecule type" value="Genomic_DNA"/>
</dbReference>
<dbReference type="PIR" id="C36942">
    <property type="entry name" value="C36942"/>
</dbReference>
<dbReference type="SMR" id="P42514"/>
<dbReference type="STRING" id="208964.PA4219"/>
<dbReference type="PaxDb" id="208964-PA4219"/>
<dbReference type="PseudoCAP" id="PA4219"/>
<dbReference type="HOGENOM" id="CLU_042155_0_0_6"/>
<dbReference type="InParanoid" id="P42514"/>
<dbReference type="Proteomes" id="UP000002438">
    <property type="component" value="Chromosome"/>
</dbReference>
<dbReference type="GO" id="GO:0005886">
    <property type="term" value="C:plasma membrane"/>
    <property type="evidence" value="ECO:0007669"/>
    <property type="project" value="UniProtKB-SubCell"/>
</dbReference>
<dbReference type="InterPro" id="IPR005625">
    <property type="entry name" value="PepSY-ass_TM"/>
</dbReference>
<dbReference type="PANTHER" id="PTHR34219">
    <property type="entry name" value="IRON-REGULATED INNER MEMBRANE PROTEIN-RELATED"/>
    <property type="match status" value="1"/>
</dbReference>
<dbReference type="PANTHER" id="PTHR34219:SF8">
    <property type="entry name" value="PEPSY DOMAIN-CONTAINING PROTEIN"/>
    <property type="match status" value="1"/>
</dbReference>
<dbReference type="Pfam" id="PF03929">
    <property type="entry name" value="PepSY_TM"/>
    <property type="match status" value="1"/>
</dbReference>
<evidence type="ECO:0000255" key="1"/>
<evidence type="ECO:0000305" key="2"/>
<accession>P42514</accession>
<sequence>MPALDLLLNLHKSLFVGFPGRVLVSLFGVSLLLLCLAGVLLHSRRWRDLRRWRRDRGLRLALFDLHGLIGIWGLPWLLLFGFTGALSGLGALGTLLLAPVAYPQEPNRVFVELMGPPPPAAEGRPLASRIDLDRLLAGDAVRAPGFVAQRLSLSHAGDVAGSVEIAGIRRGLPSTANFERHRYRLADGTLLGERSSAQRGFWLRAFIAVQPLHFAQYQWLGPGWSAALRGLHLAMGLGACLLCASGLYLWLQRRASAPDARVRLLQRLSQGFCAGLVAAAALLLLGLQLAPSELLAGPWPGRLFLVLWAAAGLAALLLPGDWPLARGLLGVAGLACLAAAVAHLAPWLMRGRLPALGPDLTLILCGALLIRHAWMQARAAAPPAHPRVTGDHHA</sequence>
<name>Y4219_PSEAE</name>
<organism>
    <name type="scientific">Pseudomonas aeruginosa (strain ATCC 15692 / DSM 22644 / CIP 104116 / JCM 14847 / LMG 12228 / 1C / PRS 101 / PAO1)</name>
    <dbReference type="NCBI Taxonomy" id="208964"/>
    <lineage>
        <taxon>Bacteria</taxon>
        <taxon>Pseudomonadati</taxon>
        <taxon>Pseudomonadota</taxon>
        <taxon>Gammaproteobacteria</taxon>
        <taxon>Pseudomonadales</taxon>
        <taxon>Pseudomonadaceae</taxon>
        <taxon>Pseudomonas</taxon>
    </lineage>
</organism>
<keyword id="KW-1003">Cell membrane</keyword>
<keyword id="KW-0472">Membrane</keyword>
<keyword id="KW-1185">Reference proteome</keyword>
<keyword id="KW-0812">Transmembrane</keyword>
<keyword id="KW-1133">Transmembrane helix</keyword>
<feature type="chain" id="PRO_0000206255" description="Uncharacterized protein PA4219">
    <location>
        <begin position="1"/>
        <end position="394"/>
    </location>
</feature>
<feature type="transmembrane region" description="Helical" evidence="1">
    <location>
        <begin position="22"/>
        <end position="42"/>
    </location>
</feature>
<feature type="transmembrane region" description="Helical" evidence="1">
    <location>
        <begin position="60"/>
        <end position="80"/>
    </location>
</feature>
<feature type="transmembrane region" description="Helical" evidence="1">
    <location>
        <begin position="81"/>
        <end position="101"/>
    </location>
</feature>
<feature type="transmembrane region" description="Helical" evidence="1">
    <location>
        <begin position="231"/>
        <end position="251"/>
    </location>
</feature>
<feature type="transmembrane region" description="Helical" evidence="1">
    <location>
        <begin position="271"/>
        <end position="291"/>
    </location>
</feature>
<feature type="transmembrane region" description="Helical" evidence="1">
    <location>
        <begin position="303"/>
        <end position="323"/>
    </location>
</feature>
<feature type="transmembrane region" description="Helical" evidence="1">
    <location>
        <begin position="328"/>
        <end position="348"/>
    </location>
</feature>
<feature type="transmembrane region" description="Helical" evidence="1">
    <location>
        <begin position="355"/>
        <end position="375"/>
    </location>
</feature>